<keyword id="KW-0067">ATP-binding</keyword>
<keyword id="KW-0173">Coenzyme A biosynthesis</keyword>
<keyword id="KW-0963">Cytoplasm</keyword>
<keyword id="KW-0460">Magnesium</keyword>
<keyword id="KW-0547">Nucleotide-binding</keyword>
<keyword id="KW-0548">Nucleotidyltransferase</keyword>
<keyword id="KW-1185">Reference proteome</keyword>
<keyword id="KW-0808">Transferase</keyword>
<name>COAD_MYCS2</name>
<accession>A0QV16</accession>
<accession>I7G6H1</accession>
<organism>
    <name type="scientific">Mycolicibacterium smegmatis (strain ATCC 700084 / mc(2)155)</name>
    <name type="common">Mycobacterium smegmatis</name>
    <dbReference type="NCBI Taxonomy" id="246196"/>
    <lineage>
        <taxon>Bacteria</taxon>
        <taxon>Bacillati</taxon>
        <taxon>Actinomycetota</taxon>
        <taxon>Actinomycetes</taxon>
        <taxon>Mycobacteriales</taxon>
        <taxon>Mycobacteriaceae</taxon>
        <taxon>Mycolicibacterium</taxon>
    </lineage>
</organism>
<dbReference type="EC" id="2.7.7.3" evidence="1"/>
<dbReference type="EMBL" id="CP000480">
    <property type="protein sequence ID" value="ABK74741.1"/>
    <property type="molecule type" value="Genomic_DNA"/>
</dbReference>
<dbReference type="EMBL" id="CP001663">
    <property type="protein sequence ID" value="AFP38821.1"/>
    <property type="molecule type" value="Genomic_DNA"/>
</dbReference>
<dbReference type="RefSeq" id="WP_011728327.1">
    <property type="nucleotide sequence ID" value="NZ_SIJM01000012.1"/>
</dbReference>
<dbReference type="RefSeq" id="YP_886754.1">
    <property type="nucleotide sequence ID" value="NC_008596.1"/>
</dbReference>
<dbReference type="SMR" id="A0QV16"/>
<dbReference type="STRING" id="246196.MSMEG_2414"/>
<dbReference type="PaxDb" id="246196-MSMEI_2353"/>
<dbReference type="GeneID" id="93457205"/>
<dbReference type="KEGG" id="msb:LJ00_12005"/>
<dbReference type="KEGG" id="msg:MSMEI_2353"/>
<dbReference type="KEGG" id="msm:MSMEG_2414"/>
<dbReference type="PATRIC" id="fig|246196.19.peg.2379"/>
<dbReference type="eggNOG" id="COG0669">
    <property type="taxonomic scope" value="Bacteria"/>
</dbReference>
<dbReference type="OrthoDB" id="9806661at2"/>
<dbReference type="UniPathway" id="UPA00241">
    <property type="reaction ID" value="UER00355"/>
</dbReference>
<dbReference type="Proteomes" id="UP000000757">
    <property type="component" value="Chromosome"/>
</dbReference>
<dbReference type="Proteomes" id="UP000006158">
    <property type="component" value="Chromosome"/>
</dbReference>
<dbReference type="GO" id="GO:0005737">
    <property type="term" value="C:cytoplasm"/>
    <property type="evidence" value="ECO:0007669"/>
    <property type="project" value="UniProtKB-SubCell"/>
</dbReference>
<dbReference type="GO" id="GO:0005524">
    <property type="term" value="F:ATP binding"/>
    <property type="evidence" value="ECO:0007669"/>
    <property type="project" value="UniProtKB-KW"/>
</dbReference>
<dbReference type="GO" id="GO:0004595">
    <property type="term" value="F:pantetheine-phosphate adenylyltransferase activity"/>
    <property type="evidence" value="ECO:0007669"/>
    <property type="project" value="UniProtKB-UniRule"/>
</dbReference>
<dbReference type="GO" id="GO:0015937">
    <property type="term" value="P:coenzyme A biosynthetic process"/>
    <property type="evidence" value="ECO:0007669"/>
    <property type="project" value="UniProtKB-UniRule"/>
</dbReference>
<dbReference type="CDD" id="cd02163">
    <property type="entry name" value="PPAT"/>
    <property type="match status" value="1"/>
</dbReference>
<dbReference type="FunFam" id="3.40.50.620:FF:000012">
    <property type="entry name" value="Phosphopantetheine adenylyltransferase"/>
    <property type="match status" value="1"/>
</dbReference>
<dbReference type="Gene3D" id="3.40.50.620">
    <property type="entry name" value="HUPs"/>
    <property type="match status" value="1"/>
</dbReference>
<dbReference type="HAMAP" id="MF_00151">
    <property type="entry name" value="PPAT_bact"/>
    <property type="match status" value="1"/>
</dbReference>
<dbReference type="InterPro" id="IPR004821">
    <property type="entry name" value="Cyt_trans-like"/>
</dbReference>
<dbReference type="InterPro" id="IPR001980">
    <property type="entry name" value="PPAT"/>
</dbReference>
<dbReference type="InterPro" id="IPR014729">
    <property type="entry name" value="Rossmann-like_a/b/a_fold"/>
</dbReference>
<dbReference type="NCBIfam" id="TIGR01510">
    <property type="entry name" value="coaD_prev_kdtB"/>
    <property type="match status" value="1"/>
</dbReference>
<dbReference type="NCBIfam" id="TIGR00125">
    <property type="entry name" value="cyt_tran_rel"/>
    <property type="match status" value="1"/>
</dbReference>
<dbReference type="PANTHER" id="PTHR21342">
    <property type="entry name" value="PHOSPHOPANTETHEINE ADENYLYLTRANSFERASE"/>
    <property type="match status" value="1"/>
</dbReference>
<dbReference type="PANTHER" id="PTHR21342:SF1">
    <property type="entry name" value="PHOSPHOPANTETHEINE ADENYLYLTRANSFERASE"/>
    <property type="match status" value="1"/>
</dbReference>
<dbReference type="Pfam" id="PF01467">
    <property type="entry name" value="CTP_transf_like"/>
    <property type="match status" value="1"/>
</dbReference>
<dbReference type="PRINTS" id="PR01020">
    <property type="entry name" value="LPSBIOSNTHSS"/>
</dbReference>
<dbReference type="SUPFAM" id="SSF52374">
    <property type="entry name" value="Nucleotidylyl transferase"/>
    <property type="match status" value="1"/>
</dbReference>
<proteinExistence type="inferred from homology"/>
<evidence type="ECO:0000255" key="1">
    <source>
        <dbReference type="HAMAP-Rule" id="MF_00151"/>
    </source>
</evidence>
<reference key="1">
    <citation type="submission" date="2006-10" db="EMBL/GenBank/DDBJ databases">
        <authorList>
            <person name="Fleischmann R.D."/>
            <person name="Dodson R.J."/>
            <person name="Haft D.H."/>
            <person name="Merkel J.S."/>
            <person name="Nelson W.C."/>
            <person name="Fraser C.M."/>
        </authorList>
    </citation>
    <scope>NUCLEOTIDE SEQUENCE [LARGE SCALE GENOMIC DNA]</scope>
    <source>
        <strain>ATCC 700084 / mc(2)155</strain>
    </source>
</reference>
<reference key="2">
    <citation type="journal article" date="2007" name="Genome Biol.">
        <title>Interrupted coding sequences in Mycobacterium smegmatis: authentic mutations or sequencing errors?</title>
        <authorList>
            <person name="Deshayes C."/>
            <person name="Perrodou E."/>
            <person name="Gallien S."/>
            <person name="Euphrasie D."/>
            <person name="Schaeffer C."/>
            <person name="Van-Dorsselaer A."/>
            <person name="Poch O."/>
            <person name="Lecompte O."/>
            <person name="Reyrat J.-M."/>
        </authorList>
    </citation>
    <scope>NUCLEOTIDE SEQUENCE [LARGE SCALE GENOMIC DNA]</scope>
    <source>
        <strain>ATCC 700084 / mc(2)155</strain>
    </source>
</reference>
<reference key="3">
    <citation type="journal article" date="2009" name="Genome Res.">
        <title>Ortho-proteogenomics: multiple proteomes investigation through orthology and a new MS-based protocol.</title>
        <authorList>
            <person name="Gallien S."/>
            <person name="Perrodou E."/>
            <person name="Carapito C."/>
            <person name="Deshayes C."/>
            <person name="Reyrat J.-M."/>
            <person name="Van Dorsselaer A."/>
            <person name="Poch O."/>
            <person name="Schaeffer C."/>
            <person name="Lecompte O."/>
        </authorList>
    </citation>
    <scope>NUCLEOTIDE SEQUENCE [LARGE SCALE GENOMIC DNA]</scope>
    <source>
        <strain>ATCC 700084 / mc(2)155</strain>
    </source>
</reference>
<sequence>MSGAVCPGSFDPVTLGHIDVFERASAQFDEVVVAVLVNPNKKGMFDLDERIAMIEESTTHLPNLRVESGQGLVVDFVKSRGLTAIVKGLRTGTDFEYELQMAQMNKHVAGVDTFFVATTPQYSFVSSSLAKEVASLGGDVSALLPSPVNRRLQEKLNG</sequence>
<comment type="function">
    <text evidence="1">Reversibly transfers an adenylyl group from ATP to 4'-phosphopantetheine, yielding dephospho-CoA (dPCoA) and pyrophosphate.</text>
</comment>
<comment type="catalytic activity">
    <reaction evidence="1">
        <text>(R)-4'-phosphopantetheine + ATP + H(+) = 3'-dephospho-CoA + diphosphate</text>
        <dbReference type="Rhea" id="RHEA:19801"/>
        <dbReference type="ChEBI" id="CHEBI:15378"/>
        <dbReference type="ChEBI" id="CHEBI:30616"/>
        <dbReference type="ChEBI" id="CHEBI:33019"/>
        <dbReference type="ChEBI" id="CHEBI:57328"/>
        <dbReference type="ChEBI" id="CHEBI:61723"/>
        <dbReference type="EC" id="2.7.7.3"/>
    </reaction>
</comment>
<comment type="cofactor">
    <cofactor evidence="1">
        <name>Mg(2+)</name>
        <dbReference type="ChEBI" id="CHEBI:18420"/>
    </cofactor>
</comment>
<comment type="pathway">
    <text evidence="1">Cofactor biosynthesis; coenzyme A biosynthesis; CoA from (R)-pantothenate: step 4/5.</text>
</comment>
<comment type="subunit">
    <text evidence="1">Homohexamer.</text>
</comment>
<comment type="subcellular location">
    <subcellularLocation>
        <location evidence="1">Cytoplasm</location>
    </subcellularLocation>
</comment>
<comment type="similarity">
    <text evidence="1">Belongs to the bacterial CoaD family.</text>
</comment>
<protein>
    <recommendedName>
        <fullName evidence="1">Phosphopantetheine adenylyltransferase</fullName>
        <ecNumber evidence="1">2.7.7.3</ecNumber>
    </recommendedName>
    <alternativeName>
        <fullName evidence="1">Dephospho-CoA pyrophosphorylase</fullName>
    </alternativeName>
    <alternativeName>
        <fullName evidence="1">Pantetheine-phosphate adenylyltransferase</fullName>
        <shortName evidence="1">PPAT</shortName>
    </alternativeName>
</protein>
<gene>
    <name evidence="1" type="primary">coaD</name>
    <name type="ordered locus">MSMEG_2414</name>
    <name type="ordered locus">MSMEI_2353</name>
</gene>
<feature type="chain" id="PRO_1000011179" description="Phosphopantetheine adenylyltransferase">
    <location>
        <begin position="1"/>
        <end position="158"/>
    </location>
</feature>
<feature type="binding site" evidence="1">
    <location>
        <begin position="9"/>
        <end position="10"/>
    </location>
    <ligand>
        <name>ATP</name>
        <dbReference type="ChEBI" id="CHEBI:30616"/>
    </ligand>
</feature>
<feature type="binding site" evidence="1">
    <location>
        <position position="9"/>
    </location>
    <ligand>
        <name>substrate</name>
    </ligand>
</feature>
<feature type="binding site" evidence="1">
    <location>
        <position position="17"/>
    </location>
    <ligand>
        <name>ATP</name>
        <dbReference type="ChEBI" id="CHEBI:30616"/>
    </ligand>
</feature>
<feature type="binding site" evidence="1">
    <location>
        <position position="41"/>
    </location>
    <ligand>
        <name>substrate</name>
    </ligand>
</feature>
<feature type="binding site" evidence="1">
    <location>
        <position position="73"/>
    </location>
    <ligand>
        <name>substrate</name>
    </ligand>
</feature>
<feature type="binding site" evidence="1">
    <location>
        <position position="87"/>
    </location>
    <ligand>
        <name>substrate</name>
    </ligand>
</feature>
<feature type="binding site" evidence="1">
    <location>
        <begin position="88"/>
        <end position="90"/>
    </location>
    <ligand>
        <name>ATP</name>
        <dbReference type="ChEBI" id="CHEBI:30616"/>
    </ligand>
</feature>
<feature type="binding site" evidence="1">
    <location>
        <position position="98"/>
    </location>
    <ligand>
        <name>ATP</name>
        <dbReference type="ChEBI" id="CHEBI:30616"/>
    </ligand>
</feature>
<feature type="binding site" evidence="1">
    <location>
        <begin position="122"/>
        <end position="128"/>
    </location>
    <ligand>
        <name>ATP</name>
        <dbReference type="ChEBI" id="CHEBI:30616"/>
    </ligand>
</feature>
<feature type="site" description="Transition state stabilizer" evidence="1">
    <location>
        <position position="17"/>
    </location>
</feature>